<gene>
    <name evidence="1" type="primary">katG</name>
    <name type="ordered locus">Fphi_0203</name>
</gene>
<reference key="1">
    <citation type="submission" date="2007-12" db="EMBL/GenBank/DDBJ databases">
        <title>Complete sequence of chromosome of Francisella philomiragia subsp. philomiragia ATCC 25017.</title>
        <authorList>
            <consortium name="US DOE Joint Genome Institute"/>
            <person name="Copeland A."/>
            <person name="Lucas S."/>
            <person name="Lapidus A."/>
            <person name="Barry K."/>
            <person name="Detter J.C."/>
            <person name="Glavina del Rio T."/>
            <person name="Hammon N."/>
            <person name="Israni S."/>
            <person name="Dalin E."/>
            <person name="Tice H."/>
            <person name="Pitluck S."/>
            <person name="Chain P."/>
            <person name="Malfatti S."/>
            <person name="Shin M."/>
            <person name="Vergez L."/>
            <person name="Schmutz J."/>
            <person name="Larimer F."/>
            <person name="Land M."/>
            <person name="Hauser L."/>
            <person name="Richardson P."/>
        </authorList>
    </citation>
    <scope>NUCLEOTIDE SEQUENCE [LARGE SCALE GENOMIC DNA]</scope>
    <source>
        <strain>ATCC 25017 / CCUG 19701 / FSC 153 / O#319-036</strain>
    </source>
</reference>
<comment type="function">
    <text evidence="1">Bifunctional enzyme with both catalase and broad-spectrum peroxidase activity.</text>
</comment>
<comment type="catalytic activity">
    <reaction evidence="1">
        <text>H2O2 + AH2 = A + 2 H2O</text>
        <dbReference type="Rhea" id="RHEA:30275"/>
        <dbReference type="ChEBI" id="CHEBI:13193"/>
        <dbReference type="ChEBI" id="CHEBI:15377"/>
        <dbReference type="ChEBI" id="CHEBI:16240"/>
        <dbReference type="ChEBI" id="CHEBI:17499"/>
        <dbReference type="EC" id="1.11.1.21"/>
    </reaction>
</comment>
<comment type="catalytic activity">
    <reaction evidence="1">
        <text>2 H2O2 = O2 + 2 H2O</text>
        <dbReference type="Rhea" id="RHEA:20309"/>
        <dbReference type="ChEBI" id="CHEBI:15377"/>
        <dbReference type="ChEBI" id="CHEBI:15379"/>
        <dbReference type="ChEBI" id="CHEBI:16240"/>
        <dbReference type="EC" id="1.11.1.21"/>
    </reaction>
</comment>
<comment type="cofactor">
    <cofactor evidence="1">
        <name>heme b</name>
        <dbReference type="ChEBI" id="CHEBI:60344"/>
    </cofactor>
    <text evidence="1">Binds 1 heme b (iron(II)-protoporphyrin IX) group per dimer.</text>
</comment>
<comment type="subunit">
    <text evidence="1">Homodimer or homotetramer.</text>
</comment>
<comment type="PTM">
    <text evidence="1">Formation of the three residue Trp-Tyr-Met cross-link is important for the catalase, but not the peroxidase activity of the enzyme.</text>
</comment>
<comment type="similarity">
    <text evidence="1">Belongs to the peroxidase family. Peroxidase/catalase subfamily.</text>
</comment>
<evidence type="ECO:0000255" key="1">
    <source>
        <dbReference type="HAMAP-Rule" id="MF_01961"/>
    </source>
</evidence>
<keyword id="KW-0349">Heme</keyword>
<keyword id="KW-0376">Hydrogen peroxide</keyword>
<keyword id="KW-0408">Iron</keyword>
<keyword id="KW-0479">Metal-binding</keyword>
<keyword id="KW-0560">Oxidoreductase</keyword>
<keyword id="KW-0575">Peroxidase</keyword>
<keyword id="KW-0732">Signal</keyword>
<organism>
    <name type="scientific">Francisella philomiragia subsp. philomiragia (strain ATCC 25017 / CCUG 19701 / FSC 153 / O#319-036)</name>
    <dbReference type="NCBI Taxonomy" id="484022"/>
    <lineage>
        <taxon>Bacteria</taxon>
        <taxon>Pseudomonadati</taxon>
        <taxon>Pseudomonadota</taxon>
        <taxon>Gammaproteobacteria</taxon>
        <taxon>Thiotrichales</taxon>
        <taxon>Francisellaceae</taxon>
        <taxon>Francisella</taxon>
    </lineage>
</organism>
<accession>B0TYQ6</accession>
<name>KATG_FRAP2</name>
<proteinExistence type="inferred from homology"/>
<dbReference type="EC" id="1.11.1.21" evidence="1"/>
<dbReference type="EMBL" id="CP000937">
    <property type="protein sequence ID" value="ABZ86421.1"/>
    <property type="molecule type" value="Genomic_DNA"/>
</dbReference>
<dbReference type="SMR" id="B0TYQ6"/>
<dbReference type="KEGG" id="fph:Fphi_0203"/>
<dbReference type="eggNOG" id="COG0376">
    <property type="taxonomic scope" value="Bacteria"/>
</dbReference>
<dbReference type="HOGENOM" id="CLU_025424_2_0_6"/>
<dbReference type="GO" id="GO:0005829">
    <property type="term" value="C:cytosol"/>
    <property type="evidence" value="ECO:0007669"/>
    <property type="project" value="TreeGrafter"/>
</dbReference>
<dbReference type="GO" id="GO:0004096">
    <property type="term" value="F:catalase activity"/>
    <property type="evidence" value="ECO:0007669"/>
    <property type="project" value="UniProtKB-UniRule"/>
</dbReference>
<dbReference type="GO" id="GO:0020037">
    <property type="term" value="F:heme binding"/>
    <property type="evidence" value="ECO:0007669"/>
    <property type="project" value="InterPro"/>
</dbReference>
<dbReference type="GO" id="GO:0046872">
    <property type="term" value="F:metal ion binding"/>
    <property type="evidence" value="ECO:0007669"/>
    <property type="project" value="UniProtKB-KW"/>
</dbReference>
<dbReference type="GO" id="GO:0070301">
    <property type="term" value="P:cellular response to hydrogen peroxide"/>
    <property type="evidence" value="ECO:0007669"/>
    <property type="project" value="TreeGrafter"/>
</dbReference>
<dbReference type="GO" id="GO:0042744">
    <property type="term" value="P:hydrogen peroxide catabolic process"/>
    <property type="evidence" value="ECO:0007669"/>
    <property type="project" value="UniProtKB-KW"/>
</dbReference>
<dbReference type="CDD" id="cd08200">
    <property type="entry name" value="catalase_peroxidase_2"/>
    <property type="match status" value="1"/>
</dbReference>
<dbReference type="Gene3D" id="1.10.520.10">
    <property type="match status" value="2"/>
</dbReference>
<dbReference type="Gene3D" id="1.10.420.10">
    <property type="entry name" value="Peroxidase, domain 2"/>
    <property type="match status" value="2"/>
</dbReference>
<dbReference type="HAMAP" id="MF_01961">
    <property type="entry name" value="Catal_peroxid"/>
    <property type="match status" value="1"/>
</dbReference>
<dbReference type="InterPro" id="IPR000763">
    <property type="entry name" value="Catalase_peroxidase"/>
</dbReference>
<dbReference type="InterPro" id="IPR002016">
    <property type="entry name" value="Haem_peroxidase"/>
</dbReference>
<dbReference type="InterPro" id="IPR010255">
    <property type="entry name" value="Haem_peroxidase_sf"/>
</dbReference>
<dbReference type="InterPro" id="IPR019794">
    <property type="entry name" value="Peroxidases_AS"/>
</dbReference>
<dbReference type="InterPro" id="IPR019793">
    <property type="entry name" value="Peroxidases_heam-ligand_BS"/>
</dbReference>
<dbReference type="NCBIfam" id="TIGR00198">
    <property type="entry name" value="cat_per_HPI"/>
    <property type="match status" value="1"/>
</dbReference>
<dbReference type="NCBIfam" id="NF011635">
    <property type="entry name" value="PRK15061.1"/>
    <property type="match status" value="1"/>
</dbReference>
<dbReference type="PANTHER" id="PTHR30555:SF0">
    <property type="entry name" value="CATALASE-PEROXIDASE"/>
    <property type="match status" value="1"/>
</dbReference>
<dbReference type="PANTHER" id="PTHR30555">
    <property type="entry name" value="HYDROPEROXIDASE I, BIFUNCTIONAL CATALASE-PEROXIDASE"/>
    <property type="match status" value="1"/>
</dbReference>
<dbReference type="Pfam" id="PF00141">
    <property type="entry name" value="peroxidase"/>
    <property type="match status" value="2"/>
</dbReference>
<dbReference type="PRINTS" id="PR00460">
    <property type="entry name" value="BPEROXIDASE"/>
</dbReference>
<dbReference type="PRINTS" id="PR00458">
    <property type="entry name" value="PEROXIDASE"/>
</dbReference>
<dbReference type="SUPFAM" id="SSF48113">
    <property type="entry name" value="Heme-dependent peroxidases"/>
    <property type="match status" value="2"/>
</dbReference>
<dbReference type="PROSITE" id="PS00435">
    <property type="entry name" value="PEROXIDASE_1"/>
    <property type="match status" value="1"/>
</dbReference>
<dbReference type="PROSITE" id="PS00436">
    <property type="entry name" value="PEROXIDASE_2"/>
    <property type="match status" value="1"/>
</dbReference>
<dbReference type="PROSITE" id="PS50873">
    <property type="entry name" value="PEROXIDASE_4"/>
    <property type="match status" value="1"/>
</dbReference>
<protein>
    <recommendedName>
        <fullName evidence="1">Catalase-peroxidase</fullName>
        <shortName evidence="1">CP</shortName>
        <ecNumber evidence="1">1.11.1.21</ecNumber>
    </recommendedName>
    <alternativeName>
        <fullName evidence="1">Peroxidase/catalase</fullName>
    </alternativeName>
</protein>
<sequence>MLKKIVTALGMSGMLLAANSAIADDKNTEMATPQSVDLSPLRNLNKLDSPMGKNYDYHQSFKKLNTEELKKDMQDLLTQSQDWWPADFGNYGPFFIRLSWHDAGTYRLADGRGGANRGQQRFSPLNSWPDNVNLDKARQLLWPIKQKYGDAVSWSDLIVLAGTVSLESMGMKPIGFAFGREDDWQGDDTNWGISPEQLMSSNVKDGKLAPAYAATQMGLIYVNPEGPDGKPDIKGAASEIRQAFRAMGMTDKETVALIAGGHTFGKTHGAVPEKDIKKDIGPAPDKAPIEQQGLGWHNSYGTGMGDDTMGSGLEGSWTSTPTFWNHDFLHNLYNLNWEKTLSPSGAHQWTPTNAKPENMVPDAHKPGVKHKPIMFTTDLALKEDDGFNKYTQEFYNNPQEFKEEFAKAWFKLTHRDMGPKSRYIGPWIPEQNFIWQDPVPVADYKQVSAQDIAQLKQDIINSGLTNQQLIRTAWDSASTYRKTDYRGGSNGARIALAPEKDWQMNEPAKLEVVLAKLKEIQTNFNNNKTDGTKVSLADLIVLGGNVGVEQAAKEAGYTIEIPFVPGRTDATQAQTDIESFNYLKTKADGFVNYSDGSLASNKLPQALVEKASMLNLNIPEMTVLVGGMRALNVNYDDSQEGVFTKTPGQLNNNFFVNLLDMSTKWEKSDTNSGEYIGIDRKTGAQKWTATSVDLIFGSNSELKAVAQVYAENGNEQKFVNDFAKAWHKVMMLGRFDVQE</sequence>
<feature type="signal peptide" evidence="1">
    <location>
        <begin position="1"/>
        <end position="23"/>
    </location>
</feature>
<feature type="chain" id="PRO_5000309079" description="Catalase-peroxidase">
    <location>
        <begin position="24"/>
        <end position="739"/>
    </location>
</feature>
<feature type="active site" description="Proton acceptor" evidence="1">
    <location>
        <position position="101"/>
    </location>
</feature>
<feature type="binding site" description="axial binding residue" evidence="1">
    <location>
        <position position="262"/>
    </location>
    <ligand>
        <name>heme b</name>
        <dbReference type="ChEBI" id="CHEBI:60344"/>
    </ligand>
    <ligandPart>
        <name>Fe</name>
        <dbReference type="ChEBI" id="CHEBI:18248"/>
    </ligandPart>
</feature>
<feature type="site" description="Transition state stabilizer" evidence="1">
    <location>
        <position position="97"/>
    </location>
</feature>
<feature type="cross-link" description="Tryptophyl-tyrosyl-methioninium (Trp-Tyr) (with M-247)" evidence="1">
    <location>
        <begin position="100"/>
        <end position="221"/>
    </location>
</feature>
<feature type="cross-link" description="Tryptophyl-tyrosyl-methioninium (Tyr-Met) (with W-100)" evidence="1">
    <location>
        <begin position="221"/>
        <end position="247"/>
    </location>
</feature>